<keyword id="KW-0119">Carbohydrate metabolism</keyword>
<keyword id="KW-0963">Cytoplasm</keyword>
<keyword id="KW-0299">Galactose metabolism</keyword>
<keyword id="KW-0548">Nucleotidyltransferase</keyword>
<keyword id="KW-1185">Reference proteome</keyword>
<keyword id="KW-0808">Transferase</keyword>
<proteinExistence type="inferred from homology"/>
<protein>
    <recommendedName>
        <fullName evidence="1">Galactose-1-phosphate uridylyltransferase</fullName>
        <shortName evidence="1">Gal-1-P uridylyltransferase</shortName>
        <ecNumber evidence="1">2.7.7.12</ecNumber>
    </recommendedName>
    <alternativeName>
        <fullName evidence="1">UDP-glucose--hexose-1-phosphate uridylyltransferase</fullName>
    </alternativeName>
</protein>
<name>GALT_STACT</name>
<evidence type="ECO:0000255" key="1">
    <source>
        <dbReference type="HAMAP-Rule" id="MF_00571"/>
    </source>
</evidence>
<reference key="1">
    <citation type="submission" date="1998-11" db="EMBL/GenBank/DDBJ databases">
        <title>Organization and nucleotide sequence of the Staphylococcus carnosus galactose operon.</title>
        <authorList>
            <person name="Krismer B."/>
            <person name="Goetz F."/>
        </authorList>
    </citation>
    <scope>NUCLEOTIDE SEQUENCE [GENOMIC DNA]</scope>
</reference>
<reference key="2">
    <citation type="journal article" date="2009" name="Appl. Environ. Microbiol.">
        <title>Genome analysis of the meat starter culture bacterium Staphylococcus carnosus TM300.</title>
        <authorList>
            <person name="Rosenstein R."/>
            <person name="Nerz C."/>
            <person name="Biswas L."/>
            <person name="Resch A."/>
            <person name="Raddatz G."/>
            <person name="Schuster S.C."/>
            <person name="Goetz F."/>
        </authorList>
    </citation>
    <scope>NUCLEOTIDE SEQUENCE [LARGE SCALE GENOMIC DNA]</scope>
    <source>
        <strain>TM300</strain>
    </source>
</reference>
<feature type="chain" id="PRO_0000169912" description="Galactose-1-phosphate uridylyltransferase">
    <location>
        <begin position="1"/>
        <end position="498"/>
    </location>
</feature>
<sequence length="498" mass="58017">MNLNRQYVNRFIDDAIQYGDYEREDNYYLQNLILEITKAESIDETKNNNGLVNPTSNEIAQFWIQQMLNNGLLEDVVYQKEIVETKLLDLITPKPSTINREFWKRYESHPEKATGYFYQICKRNHYVKEDAIAKNIHYYTETEYGDLEITINLSKPEKDAKEIAKAREAKQSSYPANALCMENEGFVGSVTQAARRNHRIVRLNLNHQPWGFQFSPYAYFPEHSIVLSEAHEPMKIEKQTFSNLLQFVQKFPHYFAGSNADLPIVGGSILSHNHYQTGRHTFPMDHAPEMKQFKMEQFPDVQAAILKWPMSVIRLKGEDLDEMTEAADHIFETWKSYTDEKLDIRAYSQDGTRHHTVTPIARFNQTTSEYELDLVLRDNQTSTQYPDGIFHPHNDVHHIKKENIGLIEVMGTAILPGRLKKELLEVERYVLGDINAEPGSHKKWADKMKEKYNFNNENAKNIIHQEVGRIFKRVLEDSGVFKQSTEGQKGFEKFIQTL</sequence>
<comment type="catalytic activity">
    <reaction evidence="1">
        <text>alpha-D-galactose 1-phosphate + UDP-alpha-D-glucose = alpha-D-glucose 1-phosphate + UDP-alpha-D-galactose</text>
        <dbReference type="Rhea" id="RHEA:13989"/>
        <dbReference type="ChEBI" id="CHEBI:58336"/>
        <dbReference type="ChEBI" id="CHEBI:58601"/>
        <dbReference type="ChEBI" id="CHEBI:58885"/>
        <dbReference type="ChEBI" id="CHEBI:66914"/>
        <dbReference type="EC" id="2.7.7.12"/>
    </reaction>
</comment>
<comment type="pathway">
    <text evidence="1">Carbohydrate metabolism; galactose metabolism.</text>
</comment>
<comment type="subcellular location">
    <subcellularLocation>
        <location evidence="1">Cytoplasm</location>
    </subcellularLocation>
</comment>
<comment type="similarity">
    <text evidence="1">Belongs to the galactose-1-phosphate uridylyltransferase type 2 family.</text>
</comment>
<organism>
    <name type="scientific">Staphylococcus carnosus (strain TM300)</name>
    <dbReference type="NCBI Taxonomy" id="396513"/>
    <lineage>
        <taxon>Bacteria</taxon>
        <taxon>Bacillati</taxon>
        <taxon>Bacillota</taxon>
        <taxon>Bacilli</taxon>
        <taxon>Bacillales</taxon>
        <taxon>Staphylococcaceae</taxon>
        <taxon>Staphylococcus</taxon>
    </lineage>
</organism>
<dbReference type="EC" id="2.7.7.12" evidence="1"/>
<dbReference type="EMBL" id="AF109295">
    <property type="protein sequence ID" value="AAF25550.1"/>
    <property type="molecule type" value="Genomic_DNA"/>
</dbReference>
<dbReference type="EMBL" id="AM295250">
    <property type="protein sequence ID" value="CAL28674.1"/>
    <property type="molecule type" value="Genomic_DNA"/>
</dbReference>
<dbReference type="RefSeq" id="WP_015901010.1">
    <property type="nucleotide sequence ID" value="NC_012121.1"/>
</dbReference>
<dbReference type="GeneID" id="93794227"/>
<dbReference type="KEGG" id="sca:SCA_1769"/>
<dbReference type="eggNOG" id="COG4468">
    <property type="taxonomic scope" value="Bacteria"/>
</dbReference>
<dbReference type="HOGENOM" id="CLU_047799_0_0_9"/>
<dbReference type="OrthoDB" id="2293at2"/>
<dbReference type="BioCyc" id="SCAR396513:SCA_RS09000-MONOMER"/>
<dbReference type="UniPathway" id="UPA00214"/>
<dbReference type="Proteomes" id="UP000000444">
    <property type="component" value="Chromosome"/>
</dbReference>
<dbReference type="GO" id="GO:0005737">
    <property type="term" value="C:cytoplasm"/>
    <property type="evidence" value="ECO:0007669"/>
    <property type="project" value="UniProtKB-SubCell"/>
</dbReference>
<dbReference type="GO" id="GO:0008108">
    <property type="term" value="F:UDP-glucose:hexose-1-phosphate uridylyltransferase activity"/>
    <property type="evidence" value="ECO:0007669"/>
    <property type="project" value="UniProtKB-UniRule"/>
</dbReference>
<dbReference type="GO" id="GO:0006012">
    <property type="term" value="P:galactose metabolic process"/>
    <property type="evidence" value="ECO:0007669"/>
    <property type="project" value="UniProtKB-UniRule"/>
</dbReference>
<dbReference type="HAMAP" id="MF_00571">
    <property type="entry name" value="GalP_UDP_trans"/>
    <property type="match status" value="1"/>
</dbReference>
<dbReference type="InterPro" id="IPR000766">
    <property type="entry name" value="GalP_uridyl_Trfase_II"/>
</dbReference>
<dbReference type="InterPro" id="IPR023425">
    <property type="entry name" value="GalP_uridyl_Trfase_II_CS"/>
</dbReference>
<dbReference type="InterPro" id="IPR005850">
    <property type="entry name" value="GalP_Utransf_C"/>
</dbReference>
<dbReference type="InterPro" id="IPR005849">
    <property type="entry name" value="GalP_Utransf_N"/>
</dbReference>
<dbReference type="NCBIfam" id="TIGR01239">
    <property type="entry name" value="galT_2"/>
    <property type="match status" value="1"/>
</dbReference>
<dbReference type="NCBIfam" id="NF003629">
    <property type="entry name" value="PRK05270.1-2"/>
    <property type="match status" value="1"/>
</dbReference>
<dbReference type="NCBIfam" id="NF003633">
    <property type="entry name" value="PRK05270.2-2"/>
    <property type="match status" value="1"/>
</dbReference>
<dbReference type="PANTHER" id="PTHR39191:SF1">
    <property type="entry name" value="DUF4922 DOMAIN-CONTAINING PROTEIN"/>
    <property type="match status" value="1"/>
</dbReference>
<dbReference type="PANTHER" id="PTHR39191">
    <property type="entry name" value="GALACTOSE-1-PHOSPHATE URIDYLYLTRANSFERASE"/>
    <property type="match status" value="1"/>
</dbReference>
<dbReference type="Pfam" id="PF02744">
    <property type="entry name" value="GalP_UDP_tr_C"/>
    <property type="match status" value="1"/>
</dbReference>
<dbReference type="Pfam" id="PF01087">
    <property type="entry name" value="GalP_UDP_transf"/>
    <property type="match status" value="1"/>
</dbReference>
<dbReference type="PIRSF" id="PIRSF006005">
    <property type="entry name" value="GalT_BS"/>
    <property type="match status" value="1"/>
</dbReference>
<dbReference type="PROSITE" id="PS01163">
    <property type="entry name" value="GAL_P_UDP_TRANSF_II"/>
    <property type="match status" value="1"/>
</dbReference>
<accession>Q9RGR9</accession>
<accession>B9DLZ4</accession>
<gene>
    <name evidence="1" type="primary">galT</name>
    <name type="ordered locus">Sca_1769</name>
</gene>